<accession>P68387</accession>
<accession>P05590</accession>
<comment type="subcellular location">
    <subcellularLocation>
        <location>Secreted</location>
    </subcellularLocation>
</comment>
<comment type="domain">
    <text>Avian ovomucoid consists of three homologous, tandem Kazal family inhibitory domains.</text>
</comment>
<name>IOVO_CALCC</name>
<sequence>FAAVSVDCSEYPKPACTLEYRPLCGSDNKTYANKCNFCNAVVESNGTLTLSHFGKC</sequence>
<organism>
    <name type="scientific">Callipepla californica</name>
    <name type="common">California quail</name>
    <name type="synonym">Lophortyx californica</name>
    <dbReference type="NCBI Taxonomy" id="67771"/>
    <lineage>
        <taxon>Eukaryota</taxon>
        <taxon>Metazoa</taxon>
        <taxon>Chordata</taxon>
        <taxon>Craniata</taxon>
        <taxon>Vertebrata</taxon>
        <taxon>Euteleostomi</taxon>
        <taxon>Archelosauria</taxon>
        <taxon>Archosauria</taxon>
        <taxon>Dinosauria</taxon>
        <taxon>Saurischia</taxon>
        <taxon>Theropoda</taxon>
        <taxon>Coelurosauria</taxon>
        <taxon>Aves</taxon>
        <taxon>Neognathae</taxon>
        <taxon>Galloanserae</taxon>
        <taxon>Galliformes</taxon>
        <taxon>Odontophoridae</taxon>
        <taxon>Callipepla</taxon>
    </lineage>
</organism>
<feature type="chain" id="PRO_0000073131" description="Ovomucoid">
    <location>
        <begin position="1" status="less than"/>
        <end position="56" status="greater than"/>
    </location>
</feature>
<feature type="domain" description="Kazal-like" evidence="1">
    <location>
        <begin position="6"/>
        <end position="56"/>
    </location>
</feature>
<feature type="site" description="Reactive bond 3">
    <location>
        <begin position="18"/>
        <end position="19"/>
    </location>
</feature>
<feature type="glycosylation site" description="N-linked (GlcNAc...) asparagine">
    <location>
        <position position="45"/>
    </location>
</feature>
<feature type="disulfide bond">
    <location>
        <begin position="8"/>
        <end position="38"/>
    </location>
</feature>
<feature type="disulfide bond">
    <location>
        <begin position="16"/>
        <end position="35"/>
    </location>
</feature>
<feature type="disulfide bond">
    <location>
        <begin position="24"/>
        <end position="56"/>
    </location>
</feature>
<feature type="non-terminal residue">
    <location>
        <position position="1"/>
    </location>
</feature>
<feature type="non-terminal residue">
    <location>
        <position position="56"/>
    </location>
</feature>
<evidence type="ECO:0000255" key="1">
    <source>
        <dbReference type="PROSITE-ProRule" id="PRU00798"/>
    </source>
</evidence>
<dbReference type="PIR" id="B31442">
    <property type="entry name" value="B31442"/>
</dbReference>
<dbReference type="SMR" id="P68387"/>
<dbReference type="GO" id="GO:0005576">
    <property type="term" value="C:extracellular region"/>
    <property type="evidence" value="ECO:0007669"/>
    <property type="project" value="UniProtKB-SubCell"/>
</dbReference>
<dbReference type="GO" id="GO:0004867">
    <property type="term" value="F:serine-type endopeptidase inhibitor activity"/>
    <property type="evidence" value="ECO:0007669"/>
    <property type="project" value="UniProtKB-KW"/>
</dbReference>
<dbReference type="CDD" id="cd00104">
    <property type="entry name" value="KAZAL_FS"/>
    <property type="match status" value="1"/>
</dbReference>
<dbReference type="FunFam" id="3.30.60.30:FF:000037">
    <property type="entry name" value="Ovomucoid"/>
    <property type="match status" value="1"/>
</dbReference>
<dbReference type="Gene3D" id="3.30.60.30">
    <property type="match status" value="1"/>
</dbReference>
<dbReference type="InterPro" id="IPR051597">
    <property type="entry name" value="Bifunctional_prot_inhibitor"/>
</dbReference>
<dbReference type="InterPro" id="IPR002350">
    <property type="entry name" value="Kazal_dom"/>
</dbReference>
<dbReference type="InterPro" id="IPR036058">
    <property type="entry name" value="Kazal_dom_sf"/>
</dbReference>
<dbReference type="InterPro" id="IPR001239">
    <property type="entry name" value="Prot_inh_Kazal-m"/>
</dbReference>
<dbReference type="PANTHER" id="PTHR47729:SF1">
    <property type="entry name" value="OVOMUCOID-LIKE-RELATED"/>
    <property type="match status" value="1"/>
</dbReference>
<dbReference type="PANTHER" id="PTHR47729">
    <property type="entry name" value="SERINE PEPTIDASE INHIBITOR, KAZAL TYPE 2, TANDEM DUPLICATE 1-RELATED"/>
    <property type="match status" value="1"/>
</dbReference>
<dbReference type="Pfam" id="PF00050">
    <property type="entry name" value="Kazal_1"/>
    <property type="match status" value="1"/>
</dbReference>
<dbReference type="PRINTS" id="PR00290">
    <property type="entry name" value="KAZALINHBTR"/>
</dbReference>
<dbReference type="SMART" id="SM00280">
    <property type="entry name" value="KAZAL"/>
    <property type="match status" value="1"/>
</dbReference>
<dbReference type="SUPFAM" id="SSF100895">
    <property type="entry name" value="Kazal-type serine protease inhibitors"/>
    <property type="match status" value="1"/>
</dbReference>
<dbReference type="PROSITE" id="PS00282">
    <property type="entry name" value="KAZAL_1"/>
    <property type="match status" value="1"/>
</dbReference>
<dbReference type="PROSITE" id="PS51465">
    <property type="entry name" value="KAZAL_2"/>
    <property type="match status" value="1"/>
</dbReference>
<keyword id="KW-0903">Direct protein sequencing</keyword>
<keyword id="KW-1015">Disulfide bond</keyword>
<keyword id="KW-0325">Glycoprotein</keyword>
<keyword id="KW-0646">Protease inhibitor</keyword>
<keyword id="KW-0677">Repeat</keyword>
<keyword id="KW-0964">Secreted</keyword>
<keyword id="KW-0722">Serine protease inhibitor</keyword>
<reference key="1">
    <citation type="journal article" date="1987" name="Biochemistry">
        <title>Ovomucoid third domains from 100 avian species: isolation, sequences, and hypervariability of enzyme-inhibitor contact residues.</title>
        <authorList>
            <person name="Laskowski M. Jr."/>
            <person name="Kato I."/>
            <person name="Ardelt W."/>
            <person name="Cook J."/>
            <person name="Denton A."/>
            <person name="Empie M.W."/>
            <person name="Kohr W.J."/>
            <person name="Park S.J."/>
            <person name="Parks K."/>
            <person name="Schatzley B.L."/>
            <person name="Schoenberger O.L."/>
            <person name="Tashiro M."/>
            <person name="Vichot G."/>
            <person name="Whatley H.E."/>
            <person name="Wieczorek A."/>
            <person name="Wieczorek M."/>
        </authorList>
    </citation>
    <scope>PROTEIN SEQUENCE</scope>
</reference>
<reference key="2">
    <citation type="journal article" date="1982" name="Biochemistry">
        <title>Thermodynamics and kinetics of single residue replacements in avian ovomucoid third domains: effect on inhibitor interactions with serine proteinases.</title>
        <authorList>
            <person name="Empie M.W."/>
            <person name="Laskowski M. Jr."/>
        </authorList>
    </citation>
    <scope>PROTEIN SEQUENCE</scope>
</reference>
<protein>
    <recommendedName>
        <fullName>Ovomucoid</fullName>
    </recommendedName>
</protein>
<proteinExistence type="evidence at protein level"/>